<accession>O95264</accession>
<accession>B0YJ23</accession>
<accession>Q0VJC3</accession>
<name>5HT3B_HUMAN</name>
<reference key="1">
    <citation type="journal article" date="1999" name="J. Biol. Chem.">
        <title>The pharmacological and functional characteristics of the serotonin 5-HT(3A) receptor are specifically modified by a 5-HT(3B) receptor subunit.</title>
        <authorList>
            <person name="Dubin A.E."/>
            <person name="Huvar R."/>
            <person name="D'Andrea M.R."/>
            <person name="Pyati J."/>
            <person name="Zhu J.Y."/>
            <person name="Joy K.C."/>
            <person name="Wilson S.J."/>
            <person name="Galindo J.E."/>
            <person name="Glass C.A."/>
            <person name="Luo L."/>
            <person name="Jackson M.R."/>
            <person name="Lovenberg T.W."/>
            <person name="Erlander M.G."/>
        </authorList>
    </citation>
    <scope>NUCLEOTIDE SEQUENCE [MRNA] (ISOFORM 1)</scope>
    <scope>FUNCTION</scope>
    <scope>TRANSPORTER ACTIVITY</scope>
    <scope>TISSUE SPECIFICITY</scope>
    <source>
        <tissue>Small intestine</tissue>
    </source>
</reference>
<reference key="2">
    <citation type="journal article" date="1999" name="Nature">
        <title>The 5-HT3B subunit is a major determinant of serotonin-receptor function.</title>
        <authorList>
            <person name="Davies P.A."/>
            <person name="Pistis M."/>
            <person name="Hanna M.C."/>
            <person name="Peters J.A."/>
            <person name="Lambert J.J."/>
            <person name="Hales T.G."/>
            <person name="Kirkness E.F."/>
        </authorList>
    </citation>
    <scope>NUCLEOTIDE SEQUENCE [MRNA] (ISOFORM 1)</scope>
    <scope>FUNCTION</scope>
    <scope>TRANSPORTER ACTIVITY</scope>
    <scope>SUBUNIT</scope>
    <scope>SUBCELLULAR LOCATION</scope>
    <scope>TISSUE SPECIFICITY</scope>
</reference>
<reference key="3">
    <citation type="journal article" date="2007" name="Gene">
        <title>Tissue-specific alternative promoters of the serotonin receptor gene HTR3B in human brain and intestine.</title>
        <authorList>
            <person name="Tzvetkov M.V."/>
            <person name="Meineke C."/>
            <person name="Oetjen E."/>
            <person name="Hirsch-Ernst K."/>
            <person name="Brockmoller J."/>
        </authorList>
    </citation>
    <scope>NUCLEOTIDE SEQUENCE [MRNA] (ISOFORM 2)</scope>
    <scope>VARIANT SER-129</scope>
    <source>
        <tissue>Brain</tissue>
    </source>
</reference>
<reference key="4">
    <citation type="submission" date="2007-02" db="EMBL/GenBank/DDBJ databases">
        <authorList>
            <consortium name="NHLBI resequencing and genotyping service (RS&amp;G)"/>
        </authorList>
    </citation>
    <scope>NUCLEOTIDE SEQUENCE [GENOMIC DNA]</scope>
</reference>
<reference key="5">
    <citation type="journal article" date="2004" name="Nat. Genet.">
        <title>Complete sequencing and characterization of 21,243 full-length human cDNAs.</title>
        <authorList>
            <person name="Ota T."/>
            <person name="Suzuki Y."/>
            <person name="Nishikawa T."/>
            <person name="Otsuki T."/>
            <person name="Sugiyama T."/>
            <person name="Irie R."/>
            <person name="Wakamatsu A."/>
            <person name="Hayashi K."/>
            <person name="Sato H."/>
            <person name="Nagai K."/>
            <person name="Kimura K."/>
            <person name="Makita H."/>
            <person name="Sekine M."/>
            <person name="Obayashi M."/>
            <person name="Nishi T."/>
            <person name="Shibahara T."/>
            <person name="Tanaka T."/>
            <person name="Ishii S."/>
            <person name="Yamamoto J."/>
            <person name="Saito K."/>
            <person name="Kawai Y."/>
            <person name="Isono Y."/>
            <person name="Nakamura Y."/>
            <person name="Nagahari K."/>
            <person name="Murakami K."/>
            <person name="Yasuda T."/>
            <person name="Iwayanagi T."/>
            <person name="Wagatsuma M."/>
            <person name="Shiratori A."/>
            <person name="Sudo H."/>
            <person name="Hosoiri T."/>
            <person name="Kaku Y."/>
            <person name="Kodaira H."/>
            <person name="Kondo H."/>
            <person name="Sugawara M."/>
            <person name="Takahashi M."/>
            <person name="Kanda K."/>
            <person name="Yokoi T."/>
            <person name="Furuya T."/>
            <person name="Kikkawa E."/>
            <person name="Omura Y."/>
            <person name="Abe K."/>
            <person name="Kamihara K."/>
            <person name="Katsuta N."/>
            <person name="Sato K."/>
            <person name="Tanikawa M."/>
            <person name="Yamazaki M."/>
            <person name="Ninomiya K."/>
            <person name="Ishibashi T."/>
            <person name="Yamashita H."/>
            <person name="Murakawa K."/>
            <person name="Fujimori K."/>
            <person name="Tanai H."/>
            <person name="Kimata M."/>
            <person name="Watanabe M."/>
            <person name="Hiraoka S."/>
            <person name="Chiba Y."/>
            <person name="Ishida S."/>
            <person name="Ono Y."/>
            <person name="Takiguchi S."/>
            <person name="Watanabe S."/>
            <person name="Yosida M."/>
            <person name="Hotuta T."/>
            <person name="Kusano J."/>
            <person name="Kanehori K."/>
            <person name="Takahashi-Fujii A."/>
            <person name="Hara H."/>
            <person name="Tanase T.-O."/>
            <person name="Nomura Y."/>
            <person name="Togiya S."/>
            <person name="Komai F."/>
            <person name="Hara R."/>
            <person name="Takeuchi K."/>
            <person name="Arita M."/>
            <person name="Imose N."/>
            <person name="Musashino K."/>
            <person name="Yuuki H."/>
            <person name="Oshima A."/>
            <person name="Sasaki N."/>
            <person name="Aotsuka S."/>
            <person name="Yoshikawa Y."/>
            <person name="Matsunawa H."/>
            <person name="Ichihara T."/>
            <person name="Shiohata N."/>
            <person name="Sano S."/>
            <person name="Moriya S."/>
            <person name="Momiyama H."/>
            <person name="Satoh N."/>
            <person name="Takami S."/>
            <person name="Terashima Y."/>
            <person name="Suzuki O."/>
            <person name="Nakagawa S."/>
            <person name="Senoh A."/>
            <person name="Mizoguchi H."/>
            <person name="Goto Y."/>
            <person name="Shimizu F."/>
            <person name="Wakebe H."/>
            <person name="Hishigaki H."/>
            <person name="Watanabe T."/>
            <person name="Sugiyama A."/>
            <person name="Takemoto M."/>
            <person name="Kawakami B."/>
            <person name="Yamazaki M."/>
            <person name="Watanabe K."/>
            <person name="Kumagai A."/>
            <person name="Itakura S."/>
            <person name="Fukuzumi Y."/>
            <person name="Fujimori Y."/>
            <person name="Komiyama M."/>
            <person name="Tashiro H."/>
            <person name="Tanigami A."/>
            <person name="Fujiwara T."/>
            <person name="Ono T."/>
            <person name="Yamada K."/>
            <person name="Fujii Y."/>
            <person name="Ozaki K."/>
            <person name="Hirao M."/>
            <person name="Ohmori Y."/>
            <person name="Kawabata A."/>
            <person name="Hikiji T."/>
            <person name="Kobatake N."/>
            <person name="Inagaki H."/>
            <person name="Ikema Y."/>
            <person name="Okamoto S."/>
            <person name="Okitani R."/>
            <person name="Kawakami T."/>
            <person name="Noguchi S."/>
            <person name="Itoh T."/>
            <person name="Shigeta K."/>
            <person name="Senba T."/>
            <person name="Matsumura K."/>
            <person name="Nakajima Y."/>
            <person name="Mizuno T."/>
            <person name="Morinaga M."/>
            <person name="Sasaki M."/>
            <person name="Togashi T."/>
            <person name="Oyama M."/>
            <person name="Hata H."/>
            <person name="Watanabe M."/>
            <person name="Komatsu T."/>
            <person name="Mizushima-Sugano J."/>
            <person name="Satoh T."/>
            <person name="Shirai Y."/>
            <person name="Takahashi Y."/>
            <person name="Nakagawa K."/>
            <person name="Okumura K."/>
            <person name="Nagase T."/>
            <person name="Nomura N."/>
            <person name="Kikuchi H."/>
            <person name="Masuho Y."/>
            <person name="Yamashita R."/>
            <person name="Nakai K."/>
            <person name="Yada T."/>
            <person name="Nakamura Y."/>
            <person name="Ohara O."/>
            <person name="Isogai T."/>
            <person name="Sugano S."/>
        </authorList>
    </citation>
    <scope>NUCLEOTIDE SEQUENCE [LARGE SCALE MRNA] (ISOFORM 1)</scope>
</reference>
<reference key="6">
    <citation type="journal article" date="2003" name="Nature">
        <title>A cytoplasmic region determines single-channel conductance in 5-HT3 receptors.</title>
        <authorList>
            <person name="Kelley S.P."/>
            <person name="Dunlop J.I."/>
            <person name="Kirkness E.F."/>
            <person name="Lambert J.J."/>
            <person name="Peters J.A."/>
        </authorList>
    </citation>
    <scope>FUNCTION</scope>
    <scope>DOMAIN</scope>
    <scope>REGION</scope>
</reference>
<reference key="7">
    <citation type="journal article" date="2007" name="Mol. Pharmacol.">
        <title>Characterization of the novel human serotonin receptor subunits 5-HT3C, 5-HT3D, and 5-HT3E.</title>
        <authorList>
            <person name="Niesler B."/>
            <person name="Walstab J."/>
            <person name="Combrink S."/>
            <person name="Moeller D."/>
            <person name="Kapeller J."/>
            <person name="Rietdorf J."/>
            <person name="Boenisch H."/>
            <person name="Goethert M."/>
            <person name="Rappold G."/>
            <person name="Bruess M."/>
        </authorList>
    </citation>
    <scope>FUNCTION</scope>
    <scope>TRANSPORTER ACTIVITY</scope>
    <scope>SUBUNIT</scope>
</reference>
<reference key="8">
    <citation type="journal article" date="2011" name="J. Neurochem.">
        <title>The identification of N-glycosylated residues of the human 5-HT3B receptor subunit: importance for cell membrane expression.</title>
        <authorList>
            <person name="Massoura A.N."/>
            <person name="Dover T.J."/>
            <person name="Newman A.S."/>
            <person name="Barnes N.M."/>
        </authorList>
    </citation>
    <scope>SUBCELLULAR LOCATION</scope>
    <scope>TOPOLOGY</scope>
    <scope>GLYCOSYLATION AT ASN-52; ASN-96; ASN-138; ASN-168 AND ASN-203</scope>
    <scope>MUTAGENESIS OF ASN-52; ASN-96; ASN-138; ASN-168 AND ASN-203</scope>
</reference>
<reference key="9">
    <citation type="journal article" date="2004" name="Am. J. Med. Genet. B Neuropsychiatr. Genet.">
        <title>Investigation of the human serotonin receptor gene HTR3B in bipolar affective and schizophrenic patients.</title>
        <authorList>
            <person name="Frank B."/>
            <person name="Niesler B."/>
            <person name="Noethen M.M."/>
            <person name="Neidt H."/>
            <person name="Propping P."/>
            <person name="Bondy B."/>
            <person name="Rietschel M."/>
            <person name="Maier W."/>
            <person name="Albus M."/>
            <person name="Rappold G."/>
        </authorList>
    </citation>
    <scope>VARIANTS SER-129; ARG-156 AND ILE-183</scope>
</reference>
<reference key="10">
    <citation type="journal article" date="2004" name="Clin. Rheumatol.">
        <title>Mutational analysis of serotonin receptor genes: HTR3A and HTR3B in fibromyalgia patients.</title>
        <authorList>
            <person name="Frank B."/>
            <person name="Niesler B."/>
            <person name="Bondy B."/>
            <person name="Spaeth M."/>
            <person name="Pongratz D.E."/>
            <person name="Ackenheil M."/>
            <person name="Fischer C."/>
            <person name="Rappold G."/>
        </authorList>
    </citation>
    <scope>VARIANTS SER-129; ARG-156 AND ILE-183</scope>
</reference>
<reference key="11">
    <citation type="journal article" date="2006" name="Biol. Psychiatry">
        <title>Distinguishable haplotype blocks in the HTR3A and HTR3B region in the Japanese reveal evidence of association of HTR3B with female major depression.</title>
        <authorList>
            <person name="Yamada K."/>
            <person name="Hattori E."/>
            <person name="Iwayama Y."/>
            <person name="Ohnishi T."/>
            <person name="Ohba H."/>
            <person name="Toyota T."/>
            <person name="Takao H."/>
            <person name="Minabe Y."/>
            <person name="Nakatani N."/>
            <person name="Higuchi T."/>
            <person name="Detera-Wadleigh S.D."/>
            <person name="Yoshikawa T."/>
        </authorList>
    </citation>
    <scope>VARIANTS SER-129; THR-143 AND ILE-183</scope>
</reference>
<reference key="12">
    <citation type="journal article" date="2010" name="Nature">
        <title>A population-specific HTR2B stop codon predisposes to severe impulsivity.</title>
        <authorList>
            <person name="Bevilacqua L."/>
            <person name="Doly S."/>
            <person name="Kaprio J."/>
            <person name="Yuan Q."/>
            <person name="Tikkanen R."/>
            <person name="Paunio T."/>
            <person name="Zhou Z."/>
            <person name="Wedenoja J."/>
            <person name="Maroteaux L."/>
            <person name="Diaz S."/>
            <person name="Belmer A."/>
            <person name="Hodgkinson C.A."/>
            <person name="Dell'osso L."/>
            <person name="Suvisaari J."/>
            <person name="Coccaro E."/>
            <person name="Rose R.J."/>
            <person name="Peltonen L."/>
            <person name="Virkkunen M."/>
            <person name="Goldman D."/>
        </authorList>
    </citation>
    <scope>VARIANT ARG-156</scope>
</reference>
<gene>
    <name evidence="17" type="primary">HTR3B</name>
</gene>
<comment type="function">
    <text evidence="3 4 9 12">Forms serotonin (5-hydroxytryptamine/5-HT3)-activated cation-selective channel complexes, which when activated cause fast, depolarizing responses in neurons.</text>
</comment>
<comment type="catalytic activity">
    <reaction evidence="12">
        <text>Na(+)(in) = Na(+)(out)</text>
        <dbReference type="Rhea" id="RHEA:34963"/>
        <dbReference type="ChEBI" id="CHEBI:29101"/>
    </reaction>
</comment>
<comment type="catalytic activity">
    <reaction evidence="12">
        <text>K(+)(in) = K(+)(out)</text>
        <dbReference type="Rhea" id="RHEA:29463"/>
        <dbReference type="ChEBI" id="CHEBI:29103"/>
    </reaction>
</comment>
<comment type="catalytic activity">
    <reaction evidence="3 9 12">
        <text>Ca(2+)(in) = Ca(2+)(out)</text>
        <dbReference type="Rhea" id="RHEA:29671"/>
        <dbReference type="ChEBI" id="CHEBI:29108"/>
    </reaction>
</comment>
<comment type="subunit">
    <text evidence="9 12">Forms homopentameric as well as heteropentameric serotonin-activated cation-selective channel complexes with HTR3A. The homomeric complex is not functional. Heteropentameric complexes display properties which resemble that of neuronal serotonin-activated channels in vivo.</text>
</comment>
<comment type="subcellular location">
    <subcellularLocation>
        <location evidence="16">Postsynaptic cell membrane</location>
        <topology evidence="10">Multi-pass membrane protein</topology>
    </subcellularLocation>
    <subcellularLocation>
        <location evidence="10">Cell membrane</location>
        <topology evidence="10">Multi-pass membrane protein</topology>
    </subcellularLocation>
    <text evidence="10">Presumably retained within the endoplasmic reticulum unless complexed with HTR3A.</text>
</comment>
<comment type="alternative products">
    <event type="alternative splicing"/>
    <isoform>
        <id>O95264-1</id>
        <name>1</name>
        <sequence type="displayed"/>
    </isoform>
    <isoform>
        <id>O95264-2</id>
        <name>2</name>
        <sequence type="described" ref="VSP_029796"/>
    </isoform>
</comment>
<comment type="tissue specificity">
    <text evidence="3 12">Expressed in the brain cortex, in the caudate nucleus, the hippocampus, the thalamus and the amygdala. Detected in the kidney and testis as well as in monocytes of the spleen, small and large intestine, uterus, prostate, ovary and placenta.</text>
</comment>
<comment type="domain">
    <text evidence="4">The HA-stretch region of HTR3B seems to confer increased conductance to HTR3A/HTR3B heteromers compared to that of HTR3A homomers.</text>
</comment>
<comment type="PTM">
    <text evidence="10">N-glycosylation required for membrane localization.</text>
</comment>
<comment type="similarity">
    <text evidence="14">Belongs to the ligand-gated ion channel (TC 1.A.9) family. 5-hydroxytryptamine receptor (TC 1.A.9.2) subfamily. HTR3B sub-subfamily.</text>
</comment>
<sequence>MLSSVMAPLWACILVAAGILATDTHHPQDSALYHLSKQLLQKYHKEVRPVYNWTKATTVYLDLFVHAILDVDAENQILKTSVWYQEVWNDEFLSWNSSMFDEIREISLPLSAIWAPDIIINEFVDIERYPDLPYVYVNSSGTIENYKPIQVVSACSLETYAFPFDVQNCSLTFKSILHTVEDVDLAFLRSPEDIQHDKKAFLNDSEWELLSVSSTYSILQSSAGGFAQIQFNVVMRRHPLVYVVSLLIPSIFLMLVDLGSFYLPPNCRARIVFKTSVLVGYTVFRVNMSNQVPRSVGSTPLIGHFFTICMAFLVLSLAKSIVLVKFLHDEQRGGQEQPFLCLRGDTDADRPRVEPRAQRAVVTESSLYGEHLAQPGTLKEVWSQLQSISNYLQTQDQTDQQEAEWLVLLSRFDRLLFQSYLFMLGIYTITLCSLWALWGGV</sequence>
<dbReference type="EMBL" id="AF169255">
    <property type="protein sequence ID" value="AAF03691.1"/>
    <property type="molecule type" value="mRNA"/>
</dbReference>
<dbReference type="EMBL" id="AF080582">
    <property type="protein sequence ID" value="AAD12242.1"/>
    <property type="molecule type" value="mRNA"/>
</dbReference>
<dbReference type="EMBL" id="AM293589">
    <property type="protein sequence ID" value="CAL25321.1"/>
    <property type="molecule type" value="mRNA"/>
</dbReference>
<dbReference type="EMBL" id="EF444985">
    <property type="protein sequence ID" value="ACA06001.1"/>
    <property type="molecule type" value="Genomic_DNA"/>
</dbReference>
<dbReference type="EMBL" id="AK314268">
    <property type="protein sequence ID" value="BAG36930.1"/>
    <property type="molecule type" value="mRNA"/>
</dbReference>
<dbReference type="CCDS" id="CCDS8364.1">
    <molecule id="O95264-1"/>
</dbReference>
<dbReference type="CCDS" id="CCDS86249.1">
    <molecule id="O95264-2"/>
</dbReference>
<dbReference type="RefSeq" id="NP_001350492.1">
    <molecule id="O95264-2"/>
    <property type="nucleotide sequence ID" value="NM_001363563.2"/>
</dbReference>
<dbReference type="RefSeq" id="NP_006019.1">
    <molecule id="O95264-1"/>
    <property type="nucleotide sequence ID" value="NM_006028.5"/>
</dbReference>
<dbReference type="RefSeq" id="XP_011541365.1">
    <property type="nucleotide sequence ID" value="XM_011543063.1"/>
</dbReference>
<dbReference type="SMR" id="O95264"/>
<dbReference type="BioGRID" id="114615">
    <property type="interactions" value="54"/>
</dbReference>
<dbReference type="ComplexPortal" id="CPX-271">
    <property type="entry name" value="5-hydroxytryptamine-3A/B receptor complex"/>
</dbReference>
<dbReference type="CORUM" id="O95264"/>
<dbReference type="FunCoup" id="O95264">
    <property type="interactions" value="216"/>
</dbReference>
<dbReference type="IntAct" id="O95264">
    <property type="interactions" value="20"/>
</dbReference>
<dbReference type="STRING" id="9606.ENSP00000260191"/>
<dbReference type="BindingDB" id="O95264"/>
<dbReference type="ChEMBL" id="CHEMBL3895"/>
<dbReference type="DrugBank" id="DB01239">
    <property type="generic name" value="Chlorprothixene"/>
</dbReference>
<dbReference type="DrugBank" id="DB11273">
    <property type="generic name" value="Dihydroergocornine"/>
</dbReference>
<dbReference type="DrugBank" id="DB13345">
    <property type="generic name" value="Dihydroergocristine"/>
</dbReference>
<dbReference type="DrugBank" id="DB00988">
    <property type="generic name" value="Dopamine"/>
</dbReference>
<dbReference type="DrugBank" id="DB01049">
    <property type="generic name" value="Ergoloid mesylate"/>
</dbReference>
<dbReference type="DrugBank" id="DB00898">
    <property type="generic name" value="Ethanol"/>
</dbReference>
<dbReference type="DrugBank" id="DB12141">
    <property type="generic name" value="Gilteritinib"/>
</dbReference>
<dbReference type="DrugBank" id="DB00715">
    <property type="generic name" value="Paroxetine"/>
</dbReference>
<dbReference type="DrugBank" id="DB08839">
    <property type="generic name" value="Serotonin"/>
</dbReference>
<dbReference type="DrugBank" id="DB09304">
    <property type="generic name" value="Setiptiline"/>
</dbReference>
<dbReference type="DrugBank" id="DB13025">
    <property type="generic name" value="Tiapride"/>
</dbReference>
<dbReference type="DrugBank" id="DB00246">
    <property type="generic name" value="Ziprasidone"/>
</dbReference>
<dbReference type="DrugCentral" id="O95264"/>
<dbReference type="GuidetoPHARMACOLOGY" id="374"/>
<dbReference type="TCDB" id="1.A.9.2.5">
    <property type="family name" value="the neurotransmitter receptor, cys loop, ligand-gated ion channel (lic) family"/>
</dbReference>
<dbReference type="GlyCosmos" id="O95264">
    <property type="glycosylation" value="6 sites, No reported glycans"/>
</dbReference>
<dbReference type="GlyGen" id="O95264">
    <property type="glycosylation" value="6 sites"/>
</dbReference>
<dbReference type="iPTMnet" id="O95264"/>
<dbReference type="PhosphoSitePlus" id="O95264"/>
<dbReference type="BioMuta" id="HTR3B"/>
<dbReference type="MassIVE" id="O95264"/>
<dbReference type="PaxDb" id="9606-ENSP00000260191"/>
<dbReference type="PeptideAtlas" id="O95264"/>
<dbReference type="TopDownProteomics" id="O95264-1">
    <molecule id="O95264-1"/>
</dbReference>
<dbReference type="Antibodypedia" id="18362">
    <property type="antibodies" value="170 antibodies from 29 providers"/>
</dbReference>
<dbReference type="DNASU" id="9177"/>
<dbReference type="Ensembl" id="ENST00000260191.8">
    <molecule id="O95264-1"/>
    <property type="protein sequence ID" value="ENSP00000260191.2"/>
    <property type="gene ID" value="ENSG00000149305.8"/>
</dbReference>
<dbReference type="Ensembl" id="ENST00000537778.5">
    <molecule id="O95264-2"/>
    <property type="protein sequence ID" value="ENSP00000443118.1"/>
    <property type="gene ID" value="ENSG00000149305.8"/>
</dbReference>
<dbReference type="GeneID" id="9177"/>
<dbReference type="KEGG" id="hsa:9177"/>
<dbReference type="MANE-Select" id="ENST00000260191.8">
    <property type="protein sequence ID" value="ENSP00000260191.2"/>
    <property type="RefSeq nucleotide sequence ID" value="NM_006028.5"/>
    <property type="RefSeq protein sequence ID" value="NP_006019.1"/>
</dbReference>
<dbReference type="UCSC" id="uc001pok.4">
    <molecule id="O95264-1"/>
    <property type="organism name" value="human"/>
</dbReference>
<dbReference type="AGR" id="HGNC:5298"/>
<dbReference type="CTD" id="9177"/>
<dbReference type="DisGeNET" id="9177"/>
<dbReference type="GeneCards" id="HTR3B"/>
<dbReference type="HGNC" id="HGNC:5298">
    <property type="gene designation" value="HTR3B"/>
</dbReference>
<dbReference type="HPA" id="ENSG00000149305">
    <property type="expression patterns" value="Tissue enhanced (brain)"/>
</dbReference>
<dbReference type="MIM" id="604654">
    <property type="type" value="gene"/>
</dbReference>
<dbReference type="neXtProt" id="NX_O95264"/>
<dbReference type="OpenTargets" id="ENSG00000149305"/>
<dbReference type="PharmGKB" id="PA29556"/>
<dbReference type="VEuPathDB" id="HostDB:ENSG00000149305"/>
<dbReference type="eggNOG" id="KOG3645">
    <property type="taxonomic scope" value="Eukaryota"/>
</dbReference>
<dbReference type="GeneTree" id="ENSGT00940000158478"/>
<dbReference type="HOGENOM" id="CLU_018074_5_0_1"/>
<dbReference type="InParanoid" id="O95264"/>
<dbReference type="OMA" id="NMANEVP"/>
<dbReference type="OrthoDB" id="5975154at2759"/>
<dbReference type="PAN-GO" id="O95264">
    <property type="GO annotations" value="11 GO annotations based on evolutionary models"/>
</dbReference>
<dbReference type="PhylomeDB" id="O95264"/>
<dbReference type="TreeFam" id="TF315605"/>
<dbReference type="PathwayCommons" id="O95264"/>
<dbReference type="Reactome" id="R-HSA-112314">
    <property type="pathway name" value="Neurotransmitter receptors and postsynaptic signal transmission"/>
</dbReference>
<dbReference type="SignaLink" id="O95264"/>
<dbReference type="SIGNOR" id="O95264"/>
<dbReference type="BioGRID-ORCS" id="9177">
    <property type="hits" value="14 hits in 1151 CRISPR screens"/>
</dbReference>
<dbReference type="GeneWiki" id="HTR3B"/>
<dbReference type="GenomeRNAi" id="9177"/>
<dbReference type="Pharos" id="O95264">
    <property type="development level" value="Tchem"/>
</dbReference>
<dbReference type="PRO" id="PR:O95264"/>
<dbReference type="Proteomes" id="UP000005640">
    <property type="component" value="Chromosome 11"/>
</dbReference>
<dbReference type="RNAct" id="O95264">
    <property type="molecule type" value="protein"/>
</dbReference>
<dbReference type="Bgee" id="ENSG00000149305">
    <property type="expression patterns" value="Expressed in prefrontal cortex and 45 other cell types or tissues"/>
</dbReference>
<dbReference type="ExpressionAtlas" id="O95264">
    <property type="expression patterns" value="baseline and differential"/>
</dbReference>
<dbReference type="GO" id="GO:0009986">
    <property type="term" value="C:cell surface"/>
    <property type="evidence" value="ECO:0000314"/>
    <property type="project" value="CACAO"/>
</dbReference>
<dbReference type="GO" id="GO:0043005">
    <property type="term" value="C:neuron projection"/>
    <property type="evidence" value="ECO:0000318"/>
    <property type="project" value="GO_Central"/>
</dbReference>
<dbReference type="GO" id="GO:0005886">
    <property type="term" value="C:plasma membrane"/>
    <property type="evidence" value="ECO:0000314"/>
    <property type="project" value="UniProtKB"/>
</dbReference>
<dbReference type="GO" id="GO:0045211">
    <property type="term" value="C:postsynaptic membrane"/>
    <property type="evidence" value="ECO:0007669"/>
    <property type="project" value="UniProtKB-SubCell"/>
</dbReference>
<dbReference type="GO" id="GO:1904602">
    <property type="term" value="C:serotonin-activated cation-selective channel complex"/>
    <property type="evidence" value="ECO:0000316"/>
    <property type="project" value="GO_Central"/>
</dbReference>
<dbReference type="GO" id="GO:0045202">
    <property type="term" value="C:synapse"/>
    <property type="evidence" value="ECO:0000318"/>
    <property type="project" value="GO_Central"/>
</dbReference>
<dbReference type="GO" id="GO:1902495">
    <property type="term" value="C:transmembrane transporter complex"/>
    <property type="evidence" value="ECO:0000318"/>
    <property type="project" value="GO_Central"/>
</dbReference>
<dbReference type="GO" id="GO:0005231">
    <property type="term" value="F:excitatory extracellular ligand-gated monoatomic ion channel activity"/>
    <property type="evidence" value="ECO:0000318"/>
    <property type="project" value="GO_Central"/>
</dbReference>
<dbReference type="GO" id="GO:0022850">
    <property type="term" value="F:serotonin-gated monoatomic cation channel activity"/>
    <property type="evidence" value="ECO:0000314"/>
    <property type="project" value="UniProtKB"/>
</dbReference>
<dbReference type="GO" id="GO:1904315">
    <property type="term" value="F:transmitter-gated monoatomic ion channel activity involved in regulation of postsynaptic membrane potential"/>
    <property type="evidence" value="ECO:0000318"/>
    <property type="project" value="GO_Central"/>
</dbReference>
<dbReference type="GO" id="GO:0007268">
    <property type="term" value="P:chemical synaptic transmission"/>
    <property type="evidence" value="ECO:0000318"/>
    <property type="project" value="GO_Central"/>
</dbReference>
<dbReference type="GO" id="GO:0098662">
    <property type="term" value="P:inorganic cation transmembrane transport"/>
    <property type="evidence" value="ECO:0000314"/>
    <property type="project" value="ComplexPortal"/>
</dbReference>
<dbReference type="GO" id="GO:0034220">
    <property type="term" value="P:monoatomic ion transmembrane transport"/>
    <property type="evidence" value="ECO:0000318"/>
    <property type="project" value="GO_Central"/>
</dbReference>
<dbReference type="GO" id="GO:0042391">
    <property type="term" value="P:regulation of membrane potential"/>
    <property type="evidence" value="ECO:0000318"/>
    <property type="project" value="GO_Central"/>
</dbReference>
<dbReference type="GO" id="GO:0007210">
    <property type="term" value="P:serotonin receptor signaling pathway"/>
    <property type="evidence" value="ECO:0000314"/>
    <property type="project" value="ComplexPortal"/>
</dbReference>
<dbReference type="GO" id="GO:0140227">
    <property type="term" value="P:serotonin-gated cation-selective signaling pathway"/>
    <property type="evidence" value="ECO:0000314"/>
    <property type="project" value="UniProt"/>
</dbReference>
<dbReference type="CDD" id="cd19012">
    <property type="entry name" value="LGIC_ECD_5-HT3B"/>
    <property type="match status" value="1"/>
</dbReference>
<dbReference type="CDD" id="cd19063">
    <property type="entry name" value="LGIC_TM_5-HT3"/>
    <property type="match status" value="1"/>
</dbReference>
<dbReference type="FunFam" id="2.70.170.10:FF:000017">
    <property type="entry name" value="5-hydroxytryptamine receptor 3A"/>
    <property type="match status" value="1"/>
</dbReference>
<dbReference type="FunFam" id="1.20.58.390:FF:000056">
    <property type="entry name" value="5-hydroxytryptamine receptor 3B"/>
    <property type="match status" value="1"/>
</dbReference>
<dbReference type="Gene3D" id="2.70.170.10">
    <property type="entry name" value="Neurotransmitter-gated ion-channel ligand-binding domain"/>
    <property type="match status" value="1"/>
</dbReference>
<dbReference type="Gene3D" id="1.20.58.390">
    <property type="entry name" value="Neurotransmitter-gated ion-channel transmembrane domain"/>
    <property type="match status" value="1"/>
</dbReference>
<dbReference type="InterPro" id="IPR008132">
    <property type="entry name" value="5HT3_rcpt"/>
</dbReference>
<dbReference type="InterPro" id="IPR008134">
    <property type="entry name" value="5HT3_rcpt_B"/>
</dbReference>
<dbReference type="InterPro" id="IPR049944">
    <property type="entry name" value="LGIC_TM_5-HT3"/>
</dbReference>
<dbReference type="InterPro" id="IPR006202">
    <property type="entry name" value="Neur_chan_lig-bd"/>
</dbReference>
<dbReference type="InterPro" id="IPR036734">
    <property type="entry name" value="Neur_chan_lig-bd_sf"/>
</dbReference>
<dbReference type="InterPro" id="IPR006201">
    <property type="entry name" value="Neur_channel"/>
</dbReference>
<dbReference type="InterPro" id="IPR036719">
    <property type="entry name" value="Neuro-gated_channel_TM_sf"/>
</dbReference>
<dbReference type="InterPro" id="IPR038050">
    <property type="entry name" value="Neuro_actylchol_rec"/>
</dbReference>
<dbReference type="InterPro" id="IPR006029">
    <property type="entry name" value="Neurotrans-gated_channel_TM"/>
</dbReference>
<dbReference type="NCBIfam" id="TIGR00860">
    <property type="entry name" value="LIC"/>
    <property type="match status" value="1"/>
</dbReference>
<dbReference type="PANTHER" id="PTHR18945">
    <property type="entry name" value="NEUROTRANSMITTER GATED ION CHANNEL"/>
    <property type="match status" value="1"/>
</dbReference>
<dbReference type="Pfam" id="PF02931">
    <property type="entry name" value="Neur_chan_LBD"/>
    <property type="match status" value="1"/>
</dbReference>
<dbReference type="Pfam" id="PF02932">
    <property type="entry name" value="Neur_chan_memb"/>
    <property type="match status" value="1"/>
</dbReference>
<dbReference type="PRINTS" id="PR01710">
    <property type="entry name" value="5HT3BRECEPTR"/>
</dbReference>
<dbReference type="PRINTS" id="PR01708">
    <property type="entry name" value="5HT3RECEPTOR"/>
</dbReference>
<dbReference type="PRINTS" id="PR00252">
    <property type="entry name" value="NRIONCHANNEL"/>
</dbReference>
<dbReference type="SUPFAM" id="SSF90112">
    <property type="entry name" value="Neurotransmitter-gated ion-channel transmembrane pore"/>
    <property type="match status" value="1"/>
</dbReference>
<dbReference type="SUPFAM" id="SSF63712">
    <property type="entry name" value="Nicotinic receptor ligand binding domain-like"/>
    <property type="match status" value="1"/>
</dbReference>
<evidence type="ECO:0000250" key="1">
    <source>
        <dbReference type="UniProtKB" id="P23979"/>
    </source>
</evidence>
<evidence type="ECO:0000255" key="2"/>
<evidence type="ECO:0000269" key="3">
    <source>
    </source>
</evidence>
<evidence type="ECO:0000269" key="4">
    <source>
    </source>
</evidence>
<evidence type="ECO:0000269" key="5">
    <source>
    </source>
</evidence>
<evidence type="ECO:0000269" key="6">
    <source>
    </source>
</evidence>
<evidence type="ECO:0000269" key="7">
    <source>
    </source>
</evidence>
<evidence type="ECO:0000269" key="8">
    <source>
    </source>
</evidence>
<evidence type="ECO:0000269" key="9">
    <source>
    </source>
</evidence>
<evidence type="ECO:0000269" key="10">
    <source>
    </source>
</evidence>
<evidence type="ECO:0000269" key="11">
    <source>
    </source>
</evidence>
<evidence type="ECO:0000269" key="12">
    <source>
    </source>
</evidence>
<evidence type="ECO:0000303" key="13">
    <source>
    </source>
</evidence>
<evidence type="ECO:0000305" key="14"/>
<evidence type="ECO:0000305" key="15">
    <source>
    </source>
</evidence>
<evidence type="ECO:0000305" key="16">
    <source>
    </source>
</evidence>
<evidence type="ECO:0000312" key="17">
    <source>
        <dbReference type="HGNC" id="HGNC:5298"/>
    </source>
</evidence>
<protein>
    <recommendedName>
        <fullName evidence="15">5-hydroxytryptamine receptor 3B</fullName>
        <shortName>5-HT3-B</shortName>
        <shortName>5-HT3B</shortName>
    </recommendedName>
    <alternativeName>
        <fullName>Serotonin receptor 3B</fullName>
    </alternativeName>
</protein>
<keyword id="KW-0025">Alternative splicing</keyword>
<keyword id="KW-1003">Cell membrane</keyword>
<keyword id="KW-1015">Disulfide bond</keyword>
<keyword id="KW-0325">Glycoprotein</keyword>
<keyword id="KW-0407">Ion channel</keyword>
<keyword id="KW-0406">Ion transport</keyword>
<keyword id="KW-1071">Ligand-gated ion channel</keyword>
<keyword id="KW-0472">Membrane</keyword>
<keyword id="KW-0628">Postsynaptic cell membrane</keyword>
<keyword id="KW-0675">Receptor</keyword>
<keyword id="KW-1185">Reference proteome</keyword>
<keyword id="KW-0732">Signal</keyword>
<keyword id="KW-0770">Synapse</keyword>
<keyword id="KW-0812">Transmembrane</keyword>
<keyword id="KW-1133">Transmembrane helix</keyword>
<keyword id="KW-0813">Transport</keyword>
<feature type="signal peptide" evidence="2">
    <location>
        <begin position="1"/>
        <end position="21"/>
    </location>
</feature>
<feature type="chain" id="PRO_0000312289" description="5-hydroxytryptamine receptor 3B">
    <location>
        <begin position="22"/>
        <end position="441"/>
    </location>
</feature>
<feature type="topological domain" description="Extracellular" evidence="10">
    <location>
        <begin position="22"/>
        <end position="238"/>
    </location>
</feature>
<feature type="transmembrane region" description="Helical; Name=1" evidence="2">
    <location>
        <begin position="239"/>
        <end position="259"/>
    </location>
</feature>
<feature type="topological domain" description="Cytoplasmic" evidence="10">
    <location>
        <begin position="260"/>
        <end position="268"/>
    </location>
</feature>
<feature type="transmembrane region" description="Helical; Name=2" evidence="2">
    <location>
        <begin position="269"/>
        <end position="286"/>
    </location>
</feature>
<feature type="topological domain" description="Extracellular" evidence="10">
    <location>
        <begin position="287"/>
        <end position="303"/>
    </location>
</feature>
<feature type="transmembrane region" description="Helical; Name=3" evidence="2">
    <location>
        <begin position="304"/>
        <end position="324"/>
    </location>
</feature>
<feature type="topological domain" description="Cytoplasmic" evidence="10">
    <location>
        <begin position="325"/>
        <end position="414"/>
    </location>
</feature>
<feature type="transmembrane region" description="Helical; Name=4" evidence="2">
    <location>
        <begin position="415"/>
        <end position="435"/>
    </location>
</feature>
<feature type="topological domain" description="Extracellular" evidence="10">
    <location>
        <begin position="436"/>
        <end position="441"/>
    </location>
</feature>
<feature type="region of interest" description="HA-stretch; determines single-channel conductance in 5-HT3 receptors" evidence="4">
    <location>
        <begin position="381"/>
        <end position="413"/>
    </location>
</feature>
<feature type="glycosylation site" description="N-linked (GlcNAc...) asparagine" evidence="10">
    <location>
        <position position="52"/>
    </location>
</feature>
<feature type="glycosylation site" description="N-linked (GlcNAc...) asparagine" evidence="10">
    <location>
        <position position="96"/>
    </location>
</feature>
<feature type="glycosylation site" description="N-linked (GlcNAc...) asparagine" evidence="10">
    <location>
        <position position="138"/>
    </location>
</feature>
<feature type="glycosylation site" description="N-linked (GlcNAc...) asparagine" evidence="10">
    <location>
        <position position="168"/>
    </location>
</feature>
<feature type="glycosylation site" description="N-linked (GlcNAc...) asparagine" evidence="10">
    <location>
        <position position="203"/>
    </location>
</feature>
<feature type="glycosylation site" description="N-linked (GlcNAc...) asparagine" evidence="2">
    <location>
        <position position="287"/>
    </location>
</feature>
<feature type="disulfide bond" evidence="1">
    <location>
        <begin position="155"/>
        <end position="169"/>
    </location>
</feature>
<feature type="splice variant" id="VSP_029796" description="In isoform 2." evidence="13">
    <original>MLSSVMAPLWACILVAA</original>
    <variation>MIVYFP</variation>
    <location>
        <begin position="1"/>
        <end position="17"/>
    </location>
</feature>
<feature type="sequence variant" id="VAR_037472" description="In dbSNP:rs1176744." evidence="5 6 7 8">
    <original>Y</original>
    <variation>S</variation>
    <location>
        <position position="129"/>
    </location>
</feature>
<feature type="sequence variant" id="VAR_037473" description="In dbSNP:rs34550504." evidence="7">
    <original>I</original>
    <variation>T</variation>
    <location>
        <position position="143"/>
    </location>
</feature>
<feature type="sequence variant" id="VAR_037474" description="In dbSNP:rs72466469." evidence="5 6 11">
    <original>S</original>
    <variation>R</variation>
    <location>
        <position position="156"/>
    </location>
</feature>
<feature type="sequence variant" id="VAR_037475" description="In dbSNP:rs17116138." evidence="5 6 7">
    <original>V</original>
    <variation>I</variation>
    <location>
        <position position="183"/>
    </location>
</feature>
<feature type="mutagenesis site" description="Reduced molecular weight. Very little expression in the cell membrane." evidence="10">
    <original>N</original>
    <variation>S</variation>
    <location>
        <position position="52"/>
    </location>
</feature>
<feature type="mutagenesis site" description="Reduced molecular weight. Very little expression in the cell membrane." evidence="10">
    <original>N</original>
    <variation>S</variation>
    <location>
        <position position="96"/>
    </location>
</feature>
<feature type="mutagenesis site" description="Reduced molecular weight. Very little expression in the cell membrane." evidence="10">
    <original>N</original>
    <variation>S</variation>
    <location>
        <position position="138"/>
    </location>
</feature>
<feature type="mutagenesis site" description="Reduced molecular weight and cell membrane expression." evidence="10">
    <original>N</original>
    <variation>S</variation>
    <location>
        <position position="168"/>
    </location>
</feature>
<feature type="mutagenesis site" description="Reduced molecular weight. Very little expression in the cell membrane." evidence="10">
    <original>N</original>
    <variation>S</variation>
    <location>
        <position position="203"/>
    </location>
</feature>
<organism>
    <name type="scientific">Homo sapiens</name>
    <name type="common">Human</name>
    <dbReference type="NCBI Taxonomy" id="9606"/>
    <lineage>
        <taxon>Eukaryota</taxon>
        <taxon>Metazoa</taxon>
        <taxon>Chordata</taxon>
        <taxon>Craniata</taxon>
        <taxon>Vertebrata</taxon>
        <taxon>Euteleostomi</taxon>
        <taxon>Mammalia</taxon>
        <taxon>Eutheria</taxon>
        <taxon>Euarchontoglires</taxon>
        <taxon>Primates</taxon>
        <taxon>Haplorrhini</taxon>
        <taxon>Catarrhini</taxon>
        <taxon>Hominidae</taxon>
        <taxon>Homo</taxon>
    </lineage>
</organism>
<proteinExistence type="evidence at protein level"/>